<comment type="function">
    <text evidence="1">PPIases accelerate the folding of proteins. It catalyzes the cis-trans isomerization of proline imidic peptide bonds in oligopeptides (By similarity).</text>
</comment>
<comment type="catalytic activity">
    <reaction>
        <text>[protein]-peptidylproline (omega=180) = [protein]-peptidylproline (omega=0)</text>
        <dbReference type="Rhea" id="RHEA:16237"/>
        <dbReference type="Rhea" id="RHEA-COMP:10747"/>
        <dbReference type="Rhea" id="RHEA-COMP:10748"/>
        <dbReference type="ChEBI" id="CHEBI:83833"/>
        <dbReference type="ChEBI" id="CHEBI:83834"/>
        <dbReference type="EC" id="5.2.1.8"/>
    </reaction>
</comment>
<comment type="subcellular location">
    <subcellularLocation>
        <location evidence="4">Periplasm</location>
    </subcellularLocation>
</comment>
<comment type="similarity">
    <text evidence="4">Belongs to the cyclophilin-type PPIase family.</text>
</comment>
<proteinExistence type="inferred from homology"/>
<protein>
    <recommendedName>
        <fullName>Probable peptidyl-prolyl cis-trans isomerase</fullName>
        <shortName>PPIase</shortName>
        <ecNumber>5.2.1.8</ecNumber>
    </recommendedName>
    <alternativeName>
        <fullName>Rotamase</fullName>
    </alternativeName>
</protein>
<feature type="signal peptide" evidence="2">
    <location>
        <begin position="1"/>
        <end position="26"/>
    </location>
</feature>
<feature type="chain" id="PRO_0000282593" description="Probable peptidyl-prolyl cis-trans isomerase">
    <location>
        <begin position="27"/>
        <end position="196"/>
    </location>
</feature>
<feature type="domain" description="PPIase cyclophilin-type" evidence="3">
    <location>
        <begin position="29"/>
        <end position="194"/>
    </location>
</feature>
<reference key="1">
    <citation type="journal article" date="2005" name="J. Bacteriol.">
        <title>Completion of the genome sequence of Brucella abortus and comparison to the highly similar genomes of Brucella melitensis and Brucella suis.</title>
        <authorList>
            <person name="Halling S.M."/>
            <person name="Peterson-Burch B.D."/>
            <person name="Bricker B.J."/>
            <person name="Zuerner R.L."/>
            <person name="Qing Z."/>
            <person name="Li L.-L."/>
            <person name="Kapur V."/>
            <person name="Alt D.P."/>
            <person name="Olsen S.C."/>
        </authorList>
    </citation>
    <scope>NUCLEOTIDE SEQUENCE [LARGE SCALE GENOMIC DNA]</scope>
    <source>
        <strain>9-941</strain>
    </source>
</reference>
<accession>Q57D43</accession>
<gene>
    <name type="primary">ppi</name>
    <name type="ordered locus">BruAb1_1100</name>
</gene>
<evidence type="ECO:0000250" key="1"/>
<evidence type="ECO:0000255" key="2"/>
<evidence type="ECO:0000255" key="3">
    <source>
        <dbReference type="PROSITE-ProRule" id="PRU00156"/>
    </source>
</evidence>
<evidence type="ECO:0000305" key="4"/>
<keyword id="KW-0413">Isomerase</keyword>
<keyword id="KW-0574">Periplasm</keyword>
<keyword id="KW-0697">Rotamase</keyword>
<keyword id="KW-0732">Signal</keyword>
<sequence length="196" mass="20751">MSFIRSALAAAAFVALSIGAVQTASAADPENTVILKLKDGDVALEIRPDLAPKHVAQIKKLVREGAYNGVAFHRVIPGFMAQTGDVKFGNMDKGFDAARVGTGGSNYPDLPAEFSKEPFVRGTVGMARSQNPNSANSQFFIMFDDGPFLNGQYTVVGKVVSGMDAVDKIKKGSEAENGAVKNPDKIIKATIEADTK</sequence>
<name>PPI1_BRUAB</name>
<dbReference type="EC" id="5.2.1.8"/>
<dbReference type="EMBL" id="AE017223">
    <property type="protein sequence ID" value="AAX74441.1"/>
    <property type="molecule type" value="Genomic_DNA"/>
</dbReference>
<dbReference type="RefSeq" id="WP_002964222.1">
    <property type="nucleotide sequence ID" value="NC_006932.1"/>
</dbReference>
<dbReference type="SMR" id="Q57D43"/>
<dbReference type="EnsemblBacteria" id="AAX74441">
    <property type="protein sequence ID" value="AAX74441"/>
    <property type="gene ID" value="BruAb1_1100"/>
</dbReference>
<dbReference type="KEGG" id="bmb:BruAb1_1100"/>
<dbReference type="HOGENOM" id="CLU_012062_16_6_5"/>
<dbReference type="Proteomes" id="UP000000540">
    <property type="component" value="Chromosome I"/>
</dbReference>
<dbReference type="GO" id="GO:0042597">
    <property type="term" value="C:periplasmic space"/>
    <property type="evidence" value="ECO:0007669"/>
    <property type="project" value="UniProtKB-SubCell"/>
</dbReference>
<dbReference type="GO" id="GO:0003755">
    <property type="term" value="F:peptidyl-prolyl cis-trans isomerase activity"/>
    <property type="evidence" value="ECO:0007669"/>
    <property type="project" value="UniProtKB-KW"/>
</dbReference>
<dbReference type="GO" id="GO:0006457">
    <property type="term" value="P:protein folding"/>
    <property type="evidence" value="ECO:0007669"/>
    <property type="project" value="InterPro"/>
</dbReference>
<dbReference type="CDD" id="cd00317">
    <property type="entry name" value="cyclophilin"/>
    <property type="match status" value="1"/>
</dbReference>
<dbReference type="Gene3D" id="2.40.100.10">
    <property type="entry name" value="Cyclophilin-like"/>
    <property type="match status" value="1"/>
</dbReference>
<dbReference type="InterPro" id="IPR029000">
    <property type="entry name" value="Cyclophilin-like_dom_sf"/>
</dbReference>
<dbReference type="InterPro" id="IPR024936">
    <property type="entry name" value="Cyclophilin-type_PPIase"/>
</dbReference>
<dbReference type="InterPro" id="IPR020892">
    <property type="entry name" value="Cyclophilin-type_PPIase_CS"/>
</dbReference>
<dbReference type="InterPro" id="IPR002130">
    <property type="entry name" value="Cyclophilin-type_PPIase_dom"/>
</dbReference>
<dbReference type="InterPro" id="IPR044666">
    <property type="entry name" value="Cyclophilin_A-like"/>
</dbReference>
<dbReference type="PANTHER" id="PTHR45625">
    <property type="entry name" value="PEPTIDYL-PROLYL CIS-TRANS ISOMERASE-RELATED"/>
    <property type="match status" value="1"/>
</dbReference>
<dbReference type="PANTHER" id="PTHR45625:SF4">
    <property type="entry name" value="PEPTIDYLPROLYL ISOMERASE DOMAIN AND WD REPEAT-CONTAINING PROTEIN 1"/>
    <property type="match status" value="1"/>
</dbReference>
<dbReference type="Pfam" id="PF00160">
    <property type="entry name" value="Pro_isomerase"/>
    <property type="match status" value="1"/>
</dbReference>
<dbReference type="PIRSF" id="PIRSF001467">
    <property type="entry name" value="Peptidylpro_ismrse"/>
    <property type="match status" value="1"/>
</dbReference>
<dbReference type="PRINTS" id="PR00153">
    <property type="entry name" value="CSAPPISMRASE"/>
</dbReference>
<dbReference type="SUPFAM" id="SSF50891">
    <property type="entry name" value="Cyclophilin-like"/>
    <property type="match status" value="1"/>
</dbReference>
<dbReference type="PROSITE" id="PS00170">
    <property type="entry name" value="CSA_PPIASE_1"/>
    <property type="match status" value="1"/>
</dbReference>
<dbReference type="PROSITE" id="PS50072">
    <property type="entry name" value="CSA_PPIASE_2"/>
    <property type="match status" value="1"/>
</dbReference>
<organism>
    <name type="scientific">Brucella abortus biovar 1 (strain 9-941)</name>
    <dbReference type="NCBI Taxonomy" id="262698"/>
    <lineage>
        <taxon>Bacteria</taxon>
        <taxon>Pseudomonadati</taxon>
        <taxon>Pseudomonadota</taxon>
        <taxon>Alphaproteobacteria</taxon>
        <taxon>Hyphomicrobiales</taxon>
        <taxon>Brucellaceae</taxon>
        <taxon>Brucella/Ochrobactrum group</taxon>
        <taxon>Brucella</taxon>
    </lineage>
</organism>